<protein>
    <recommendedName>
        <fullName>Zinc finger protein 441</fullName>
    </recommendedName>
</protein>
<evidence type="ECO:0000255" key="1">
    <source>
        <dbReference type="PROSITE-ProRule" id="PRU00042"/>
    </source>
</evidence>
<evidence type="ECO:0000255" key="2">
    <source>
        <dbReference type="PROSITE-ProRule" id="PRU00119"/>
    </source>
</evidence>
<evidence type="ECO:0000303" key="3">
    <source>
    </source>
</evidence>
<evidence type="ECO:0000305" key="4"/>
<reference key="1">
    <citation type="journal article" date="2004" name="Nat. Genet.">
        <title>Complete sequencing and characterization of 21,243 full-length human cDNAs.</title>
        <authorList>
            <person name="Ota T."/>
            <person name="Suzuki Y."/>
            <person name="Nishikawa T."/>
            <person name="Otsuki T."/>
            <person name="Sugiyama T."/>
            <person name="Irie R."/>
            <person name="Wakamatsu A."/>
            <person name="Hayashi K."/>
            <person name="Sato H."/>
            <person name="Nagai K."/>
            <person name="Kimura K."/>
            <person name="Makita H."/>
            <person name="Sekine M."/>
            <person name="Obayashi M."/>
            <person name="Nishi T."/>
            <person name="Shibahara T."/>
            <person name="Tanaka T."/>
            <person name="Ishii S."/>
            <person name="Yamamoto J."/>
            <person name="Saito K."/>
            <person name="Kawai Y."/>
            <person name="Isono Y."/>
            <person name="Nakamura Y."/>
            <person name="Nagahari K."/>
            <person name="Murakami K."/>
            <person name="Yasuda T."/>
            <person name="Iwayanagi T."/>
            <person name="Wagatsuma M."/>
            <person name="Shiratori A."/>
            <person name="Sudo H."/>
            <person name="Hosoiri T."/>
            <person name="Kaku Y."/>
            <person name="Kodaira H."/>
            <person name="Kondo H."/>
            <person name="Sugawara M."/>
            <person name="Takahashi M."/>
            <person name="Kanda K."/>
            <person name="Yokoi T."/>
            <person name="Furuya T."/>
            <person name="Kikkawa E."/>
            <person name="Omura Y."/>
            <person name="Abe K."/>
            <person name="Kamihara K."/>
            <person name="Katsuta N."/>
            <person name="Sato K."/>
            <person name="Tanikawa M."/>
            <person name="Yamazaki M."/>
            <person name="Ninomiya K."/>
            <person name="Ishibashi T."/>
            <person name="Yamashita H."/>
            <person name="Murakawa K."/>
            <person name="Fujimori K."/>
            <person name="Tanai H."/>
            <person name="Kimata M."/>
            <person name="Watanabe M."/>
            <person name="Hiraoka S."/>
            <person name="Chiba Y."/>
            <person name="Ishida S."/>
            <person name="Ono Y."/>
            <person name="Takiguchi S."/>
            <person name="Watanabe S."/>
            <person name="Yosida M."/>
            <person name="Hotuta T."/>
            <person name="Kusano J."/>
            <person name="Kanehori K."/>
            <person name="Takahashi-Fujii A."/>
            <person name="Hara H."/>
            <person name="Tanase T.-O."/>
            <person name="Nomura Y."/>
            <person name="Togiya S."/>
            <person name="Komai F."/>
            <person name="Hara R."/>
            <person name="Takeuchi K."/>
            <person name="Arita M."/>
            <person name="Imose N."/>
            <person name="Musashino K."/>
            <person name="Yuuki H."/>
            <person name="Oshima A."/>
            <person name="Sasaki N."/>
            <person name="Aotsuka S."/>
            <person name="Yoshikawa Y."/>
            <person name="Matsunawa H."/>
            <person name="Ichihara T."/>
            <person name="Shiohata N."/>
            <person name="Sano S."/>
            <person name="Moriya S."/>
            <person name="Momiyama H."/>
            <person name="Satoh N."/>
            <person name="Takami S."/>
            <person name="Terashima Y."/>
            <person name="Suzuki O."/>
            <person name="Nakagawa S."/>
            <person name="Senoh A."/>
            <person name="Mizoguchi H."/>
            <person name="Goto Y."/>
            <person name="Shimizu F."/>
            <person name="Wakebe H."/>
            <person name="Hishigaki H."/>
            <person name="Watanabe T."/>
            <person name="Sugiyama A."/>
            <person name="Takemoto M."/>
            <person name="Kawakami B."/>
            <person name="Yamazaki M."/>
            <person name="Watanabe K."/>
            <person name="Kumagai A."/>
            <person name="Itakura S."/>
            <person name="Fukuzumi Y."/>
            <person name="Fujimori Y."/>
            <person name="Komiyama M."/>
            <person name="Tashiro H."/>
            <person name="Tanigami A."/>
            <person name="Fujiwara T."/>
            <person name="Ono T."/>
            <person name="Yamada K."/>
            <person name="Fujii Y."/>
            <person name="Ozaki K."/>
            <person name="Hirao M."/>
            <person name="Ohmori Y."/>
            <person name="Kawabata A."/>
            <person name="Hikiji T."/>
            <person name="Kobatake N."/>
            <person name="Inagaki H."/>
            <person name="Ikema Y."/>
            <person name="Okamoto S."/>
            <person name="Okitani R."/>
            <person name="Kawakami T."/>
            <person name="Noguchi S."/>
            <person name="Itoh T."/>
            <person name="Shigeta K."/>
            <person name="Senba T."/>
            <person name="Matsumura K."/>
            <person name="Nakajima Y."/>
            <person name="Mizuno T."/>
            <person name="Morinaga M."/>
            <person name="Sasaki M."/>
            <person name="Togashi T."/>
            <person name="Oyama M."/>
            <person name="Hata H."/>
            <person name="Watanabe M."/>
            <person name="Komatsu T."/>
            <person name="Mizushima-Sugano J."/>
            <person name="Satoh T."/>
            <person name="Shirai Y."/>
            <person name="Takahashi Y."/>
            <person name="Nakagawa K."/>
            <person name="Okumura K."/>
            <person name="Nagase T."/>
            <person name="Nomura N."/>
            <person name="Kikuchi H."/>
            <person name="Masuho Y."/>
            <person name="Yamashita R."/>
            <person name="Nakai K."/>
            <person name="Yada T."/>
            <person name="Nakamura Y."/>
            <person name="Ohara O."/>
            <person name="Isogai T."/>
            <person name="Sugano S."/>
        </authorList>
    </citation>
    <scope>NUCLEOTIDE SEQUENCE [LARGE SCALE MRNA] (ISOFORM 2)</scope>
</reference>
<reference key="2">
    <citation type="journal article" date="2004" name="Nature">
        <title>The DNA sequence and biology of human chromosome 19.</title>
        <authorList>
            <person name="Grimwood J."/>
            <person name="Gordon L.A."/>
            <person name="Olsen A.S."/>
            <person name="Terry A."/>
            <person name="Schmutz J."/>
            <person name="Lamerdin J.E."/>
            <person name="Hellsten U."/>
            <person name="Goodstein D."/>
            <person name="Couronne O."/>
            <person name="Tran-Gyamfi M."/>
            <person name="Aerts A."/>
            <person name="Altherr M."/>
            <person name="Ashworth L."/>
            <person name="Bajorek E."/>
            <person name="Black S."/>
            <person name="Branscomb E."/>
            <person name="Caenepeel S."/>
            <person name="Carrano A.V."/>
            <person name="Caoile C."/>
            <person name="Chan Y.M."/>
            <person name="Christensen M."/>
            <person name="Cleland C.A."/>
            <person name="Copeland A."/>
            <person name="Dalin E."/>
            <person name="Dehal P."/>
            <person name="Denys M."/>
            <person name="Detter J.C."/>
            <person name="Escobar J."/>
            <person name="Flowers D."/>
            <person name="Fotopulos D."/>
            <person name="Garcia C."/>
            <person name="Georgescu A.M."/>
            <person name="Glavina T."/>
            <person name="Gomez M."/>
            <person name="Gonzales E."/>
            <person name="Groza M."/>
            <person name="Hammon N."/>
            <person name="Hawkins T."/>
            <person name="Haydu L."/>
            <person name="Ho I."/>
            <person name="Huang W."/>
            <person name="Israni S."/>
            <person name="Jett J."/>
            <person name="Kadner K."/>
            <person name="Kimball H."/>
            <person name="Kobayashi A."/>
            <person name="Larionov V."/>
            <person name="Leem S.-H."/>
            <person name="Lopez F."/>
            <person name="Lou Y."/>
            <person name="Lowry S."/>
            <person name="Malfatti S."/>
            <person name="Martinez D."/>
            <person name="McCready P.M."/>
            <person name="Medina C."/>
            <person name="Morgan J."/>
            <person name="Nelson K."/>
            <person name="Nolan M."/>
            <person name="Ovcharenko I."/>
            <person name="Pitluck S."/>
            <person name="Pollard M."/>
            <person name="Popkie A.P."/>
            <person name="Predki P."/>
            <person name="Quan G."/>
            <person name="Ramirez L."/>
            <person name="Rash S."/>
            <person name="Retterer J."/>
            <person name="Rodriguez A."/>
            <person name="Rogers S."/>
            <person name="Salamov A."/>
            <person name="Salazar A."/>
            <person name="She X."/>
            <person name="Smith D."/>
            <person name="Slezak T."/>
            <person name="Solovyev V."/>
            <person name="Thayer N."/>
            <person name="Tice H."/>
            <person name="Tsai M."/>
            <person name="Ustaszewska A."/>
            <person name="Vo N."/>
            <person name="Wagner M."/>
            <person name="Wheeler J."/>
            <person name="Wu K."/>
            <person name="Xie G."/>
            <person name="Yang J."/>
            <person name="Dubchak I."/>
            <person name="Furey T.S."/>
            <person name="DeJong P."/>
            <person name="Dickson M."/>
            <person name="Gordon D."/>
            <person name="Eichler E.E."/>
            <person name="Pennacchio L.A."/>
            <person name="Richardson P."/>
            <person name="Stubbs L."/>
            <person name="Rokhsar D.S."/>
            <person name="Myers R.M."/>
            <person name="Rubin E.M."/>
            <person name="Lucas S.M."/>
        </authorList>
    </citation>
    <scope>NUCLEOTIDE SEQUENCE [LARGE SCALE GENOMIC DNA]</scope>
</reference>
<reference key="3">
    <citation type="journal article" date="2004" name="Genome Res.">
        <title>The status, quality, and expansion of the NIH full-length cDNA project: the Mammalian Gene Collection (MGC).</title>
        <authorList>
            <consortium name="The MGC Project Team"/>
        </authorList>
    </citation>
    <scope>NUCLEOTIDE SEQUENCE [LARGE SCALE MRNA] OF 5-693 (ISOFORM 1)</scope>
</reference>
<gene>
    <name type="primary">ZNF441</name>
</gene>
<keyword id="KW-0025">Alternative splicing</keyword>
<keyword id="KW-0238">DNA-binding</keyword>
<keyword id="KW-0479">Metal-binding</keyword>
<keyword id="KW-0539">Nucleus</keyword>
<keyword id="KW-1267">Proteomics identification</keyword>
<keyword id="KW-1185">Reference proteome</keyword>
<keyword id="KW-0677">Repeat</keyword>
<keyword id="KW-0804">Transcription</keyword>
<keyword id="KW-0805">Transcription regulation</keyword>
<keyword id="KW-0862">Zinc</keyword>
<keyword id="KW-0863">Zinc-finger</keyword>
<feature type="chain" id="PRO_0000047590" description="Zinc finger protein 441">
    <location>
        <begin position="1"/>
        <end position="693"/>
    </location>
</feature>
<feature type="domain" description="KRAB" evidence="2">
    <location>
        <begin position="4"/>
        <end position="79"/>
    </location>
</feature>
<feature type="zinc finger region" description="C2H2-type 1" evidence="1">
    <location>
        <begin position="169"/>
        <end position="190"/>
    </location>
</feature>
<feature type="zinc finger region" description="C2H2-type 2; degenerate" evidence="1">
    <location>
        <begin position="196"/>
        <end position="218"/>
    </location>
</feature>
<feature type="zinc finger region" description="C2H2-type 3; degenerate" evidence="1">
    <location>
        <begin position="224"/>
        <end position="246"/>
    </location>
</feature>
<feature type="zinc finger region" description="C2H2-type 4; degenerate" evidence="1">
    <location>
        <begin position="252"/>
        <end position="274"/>
    </location>
</feature>
<feature type="zinc finger region" description="C2H2-type 5" evidence="1">
    <location>
        <begin position="280"/>
        <end position="302"/>
    </location>
</feature>
<feature type="zinc finger region" description="C2H2-type 6" evidence="1">
    <location>
        <begin position="308"/>
        <end position="330"/>
    </location>
</feature>
<feature type="zinc finger region" description="C2H2-type 7" evidence="1">
    <location>
        <begin position="336"/>
        <end position="358"/>
    </location>
</feature>
<feature type="zinc finger region" description="C2H2-type 8" evidence="1">
    <location>
        <begin position="364"/>
        <end position="386"/>
    </location>
</feature>
<feature type="zinc finger region" description="C2H2-type 9" evidence="1">
    <location>
        <begin position="392"/>
        <end position="413"/>
    </location>
</feature>
<feature type="zinc finger region" description="C2H2-type 10" evidence="1">
    <location>
        <begin position="419"/>
        <end position="441"/>
    </location>
</feature>
<feature type="zinc finger region" description="C2H2-type 11" evidence="1">
    <location>
        <begin position="447"/>
        <end position="469"/>
    </location>
</feature>
<feature type="zinc finger region" description="C2H2-type 12" evidence="1">
    <location>
        <begin position="475"/>
        <end position="497"/>
    </location>
</feature>
<feature type="zinc finger region" description="C2H2-type 13" evidence="1">
    <location>
        <begin position="503"/>
        <end position="525"/>
    </location>
</feature>
<feature type="zinc finger region" description="C2H2-type 14" evidence="1">
    <location>
        <begin position="531"/>
        <end position="553"/>
    </location>
</feature>
<feature type="zinc finger region" description="C2H2-type 15" evidence="1">
    <location>
        <begin position="559"/>
        <end position="581"/>
    </location>
</feature>
<feature type="zinc finger region" description="C2H2-type 16" evidence="1">
    <location>
        <begin position="587"/>
        <end position="609"/>
    </location>
</feature>
<feature type="zinc finger region" description="C2H2-type 17" evidence="1">
    <location>
        <begin position="615"/>
        <end position="637"/>
    </location>
</feature>
<feature type="zinc finger region" description="C2H2-type 18" evidence="1">
    <location>
        <begin position="643"/>
        <end position="665"/>
    </location>
</feature>
<feature type="zinc finger region" description="C2H2-type 19" evidence="1">
    <location>
        <begin position="671"/>
        <end position="693"/>
    </location>
</feature>
<feature type="splice variant" id="VSP_039877" description="In isoform 2." evidence="3">
    <location>
        <begin position="1"/>
        <end position="44"/>
    </location>
</feature>
<feature type="sequence conflict" description="In Ref. 1; BAC04661 and 3; BC144217." evidence="4" ref="1 3">
    <original>V</original>
    <variation>I</variation>
    <location>
        <position position="122"/>
    </location>
</feature>
<feature type="sequence conflict" description="In Ref. 1; BAC04661." evidence="4" ref="1">
    <original>C</original>
    <variation>Y</variation>
    <location>
        <position position="131"/>
    </location>
</feature>
<feature type="sequence conflict" description="In Ref. 1; BAC04661." evidence="4" ref="1">
    <original>T</original>
    <variation>A</variation>
    <location>
        <position position="385"/>
    </location>
</feature>
<proteinExistence type="evidence at protein level"/>
<organism>
    <name type="scientific">Homo sapiens</name>
    <name type="common">Human</name>
    <dbReference type="NCBI Taxonomy" id="9606"/>
    <lineage>
        <taxon>Eukaryota</taxon>
        <taxon>Metazoa</taxon>
        <taxon>Chordata</taxon>
        <taxon>Craniata</taxon>
        <taxon>Vertebrata</taxon>
        <taxon>Euteleostomi</taxon>
        <taxon>Mammalia</taxon>
        <taxon>Eutheria</taxon>
        <taxon>Euarchontoglires</taxon>
        <taxon>Primates</taxon>
        <taxon>Haplorrhini</taxon>
        <taxon>Catarrhini</taxon>
        <taxon>Hominidae</taxon>
        <taxon>Homo</taxon>
    </lineage>
</organism>
<sequence>MDSVAFEDVAINFTCEEWALLGPSQKSLYRDVMQETIRNLDCIGMIWQNHDIEEDQYKDLRRNLRCHMVERACEIKDNSQCGGPFTQTQDSIVNEKIPGVDPWESSECTDVLMGRSSLNCYVRVDSEHKPCEYQEYGEKPYTHTQCGTAFSYQPCFQIHERPQHGKKLYDCKECASFSSLENLQRHMAAHHGDGPRICKLCGNAFIWPSLFHMLRRTHTEEKPYEYEQCSTAFPAYSSTLRHERTHSGEKPYQCKQCGKAFSCSCYTQLYERTHTGEQSYECKQCGKAFYHLGSFQRHMIVHTGDGPHKCKICGKGFLSPSSVRRHKRTHTGEKPYECKYCGKAFSDCTGFRRHMITHTGDGPHKCKVCGKAFDSPSLCRRHETTHTGEKPYKCECGKAFSDFYYFRNHETTHTGEKPYKCKQCGKAFICCTYLQIHERIHTGERPYKCKQCGKAFRSSNYIRVHEKTHTGEKPYECKQCGKALSHLKSFQRHMIMHTGDGPHKCKICGKSFDSPSSFRRHERIHTGERPYKCKLCGKGFRSSSYIQLHERTHTGEKPYGCQQCGKALSDLSSFRRHMITHTGNGPHKCKICGKGFDYPSSVQRHERTHTGEKPYECKECGKAFSHSSYLRIHERVHTGEKPYKCKECGKPFHCPSAFHKHERTHSMEKPYKCKECGEAFHCISSFHKHEMTH</sequence>
<name>ZN441_HUMAN</name>
<dbReference type="EMBL" id="AK095956">
    <property type="protein sequence ID" value="BAC04661.1"/>
    <property type="status" value="ALT_FRAME"/>
    <property type="molecule type" value="mRNA"/>
</dbReference>
<dbReference type="EMBL" id="AC008543">
    <property type="status" value="NOT_ANNOTATED_CDS"/>
    <property type="molecule type" value="Genomic_DNA"/>
</dbReference>
<dbReference type="EMBL" id="BC144217">
    <property type="status" value="NOT_ANNOTATED_CDS"/>
    <property type="molecule type" value="mRNA"/>
</dbReference>
<dbReference type="CCDS" id="CCDS12266.2">
    <molecule id="Q8N8Z8-1"/>
</dbReference>
<dbReference type="RefSeq" id="NP_689568.2">
    <molecule id="Q8N8Z8-1"/>
    <property type="nucleotide sequence ID" value="NM_152355.3"/>
</dbReference>
<dbReference type="SMR" id="Q8N8Z8"/>
<dbReference type="BioGRID" id="125951">
    <property type="interactions" value="9"/>
</dbReference>
<dbReference type="FunCoup" id="Q8N8Z8">
    <property type="interactions" value="518"/>
</dbReference>
<dbReference type="IntAct" id="Q8N8Z8">
    <property type="interactions" value="11"/>
</dbReference>
<dbReference type="STRING" id="9606.ENSP00000350576"/>
<dbReference type="iPTMnet" id="Q8N8Z8"/>
<dbReference type="PhosphoSitePlus" id="Q8N8Z8"/>
<dbReference type="BioMuta" id="ZNF441"/>
<dbReference type="DMDM" id="308153532"/>
<dbReference type="jPOST" id="Q8N8Z8"/>
<dbReference type="MassIVE" id="Q8N8Z8"/>
<dbReference type="PaxDb" id="9606-ENSP00000350576"/>
<dbReference type="PeptideAtlas" id="Q8N8Z8"/>
<dbReference type="Antibodypedia" id="13216">
    <property type="antibodies" value="114 antibodies from 23 providers"/>
</dbReference>
<dbReference type="DNASU" id="126068"/>
<dbReference type="Ensembl" id="ENST00000357901.5">
    <molecule id="Q8N8Z8-1"/>
    <property type="protein sequence ID" value="ENSP00000350576.4"/>
    <property type="gene ID" value="ENSG00000197044.11"/>
</dbReference>
<dbReference type="GeneID" id="126068"/>
<dbReference type="KEGG" id="hsa:126068"/>
<dbReference type="MANE-Select" id="ENST00000357901.5">
    <property type="protein sequence ID" value="ENSP00000350576.4"/>
    <property type="RefSeq nucleotide sequence ID" value="NM_152355.3"/>
    <property type="RefSeq protein sequence ID" value="NP_689568.2"/>
</dbReference>
<dbReference type="UCSC" id="uc010dyj.4">
    <molecule id="Q8N8Z8-1"/>
    <property type="organism name" value="human"/>
</dbReference>
<dbReference type="AGR" id="HGNC:20875"/>
<dbReference type="CTD" id="126068"/>
<dbReference type="GeneCards" id="ZNF441"/>
<dbReference type="HGNC" id="HGNC:20875">
    <property type="gene designation" value="ZNF441"/>
</dbReference>
<dbReference type="HPA" id="ENSG00000197044">
    <property type="expression patterns" value="Low tissue specificity"/>
</dbReference>
<dbReference type="neXtProt" id="NX_Q8N8Z8"/>
<dbReference type="OpenTargets" id="ENSG00000197044"/>
<dbReference type="VEuPathDB" id="HostDB:ENSG00000197044"/>
<dbReference type="eggNOG" id="KOG1721">
    <property type="taxonomic scope" value="Eukaryota"/>
</dbReference>
<dbReference type="GeneTree" id="ENSGT00950000182755"/>
<dbReference type="HOGENOM" id="CLU_002678_44_5_1"/>
<dbReference type="InParanoid" id="Q8N8Z8"/>
<dbReference type="OMA" id="QRHMAAH"/>
<dbReference type="OrthoDB" id="6077919at2759"/>
<dbReference type="PAN-GO" id="Q8N8Z8">
    <property type="GO annotations" value="4 GO annotations based on evolutionary models"/>
</dbReference>
<dbReference type="PhylomeDB" id="Q8N8Z8"/>
<dbReference type="TreeFam" id="TF343410"/>
<dbReference type="PathwayCommons" id="Q8N8Z8"/>
<dbReference type="Reactome" id="R-HSA-212436">
    <property type="pathway name" value="Generic Transcription Pathway"/>
</dbReference>
<dbReference type="SignaLink" id="Q8N8Z8"/>
<dbReference type="BioGRID-ORCS" id="126068">
    <property type="hits" value="13 hits in 1171 CRISPR screens"/>
</dbReference>
<dbReference type="GenomeRNAi" id="126068"/>
<dbReference type="Pharos" id="Q8N8Z8">
    <property type="development level" value="Tdark"/>
</dbReference>
<dbReference type="PRO" id="PR:Q8N8Z8"/>
<dbReference type="Proteomes" id="UP000005640">
    <property type="component" value="Chromosome 19"/>
</dbReference>
<dbReference type="RNAct" id="Q8N8Z8">
    <property type="molecule type" value="protein"/>
</dbReference>
<dbReference type="Bgee" id="ENSG00000197044">
    <property type="expression patterns" value="Expressed in calcaneal tendon and 144 other cell types or tissues"/>
</dbReference>
<dbReference type="ExpressionAtlas" id="Q8N8Z8">
    <property type="expression patterns" value="baseline and differential"/>
</dbReference>
<dbReference type="GO" id="GO:0005634">
    <property type="term" value="C:nucleus"/>
    <property type="evidence" value="ECO:0000318"/>
    <property type="project" value="GO_Central"/>
</dbReference>
<dbReference type="GO" id="GO:0000981">
    <property type="term" value="F:DNA-binding transcription factor activity, RNA polymerase II-specific"/>
    <property type="evidence" value="ECO:0000318"/>
    <property type="project" value="GO_Central"/>
</dbReference>
<dbReference type="GO" id="GO:0000977">
    <property type="term" value="F:RNA polymerase II transcription regulatory region sequence-specific DNA binding"/>
    <property type="evidence" value="ECO:0000318"/>
    <property type="project" value="GO_Central"/>
</dbReference>
<dbReference type="GO" id="GO:0008270">
    <property type="term" value="F:zinc ion binding"/>
    <property type="evidence" value="ECO:0007669"/>
    <property type="project" value="UniProtKB-KW"/>
</dbReference>
<dbReference type="GO" id="GO:0006357">
    <property type="term" value="P:regulation of transcription by RNA polymerase II"/>
    <property type="evidence" value="ECO:0000318"/>
    <property type="project" value="GO_Central"/>
</dbReference>
<dbReference type="CDD" id="cd07765">
    <property type="entry name" value="KRAB_A-box"/>
    <property type="match status" value="1"/>
</dbReference>
<dbReference type="FunFam" id="3.30.160.60:FF:000446">
    <property type="entry name" value="Zinc finger protein"/>
    <property type="match status" value="1"/>
</dbReference>
<dbReference type="FunFam" id="3.30.160.60:FF:000193">
    <property type="entry name" value="Zinc finger protein 300"/>
    <property type="match status" value="4"/>
</dbReference>
<dbReference type="FunFam" id="3.30.160.60:FF:000184">
    <property type="entry name" value="Zinc finger protein 333"/>
    <property type="match status" value="2"/>
</dbReference>
<dbReference type="FunFam" id="3.30.160.60:FF:002344">
    <property type="entry name" value="Zinc finger protein 333"/>
    <property type="match status" value="1"/>
</dbReference>
<dbReference type="FunFam" id="3.30.160.60:FF:002254">
    <property type="entry name" value="Zinc finger protein 540"/>
    <property type="match status" value="1"/>
</dbReference>
<dbReference type="FunFam" id="3.30.160.60:FF:000156">
    <property type="entry name" value="Zinc finger protein 568"/>
    <property type="match status" value="5"/>
</dbReference>
<dbReference type="FunFam" id="3.30.160.60:FF:002357">
    <property type="entry name" value="Zinc finger protein 782"/>
    <property type="match status" value="1"/>
</dbReference>
<dbReference type="FunFam" id="3.30.160.60:FF:000493">
    <property type="entry name" value="Zinc finger protein 805"/>
    <property type="match status" value="1"/>
</dbReference>
<dbReference type="Gene3D" id="6.10.140.140">
    <property type="match status" value="1"/>
</dbReference>
<dbReference type="Gene3D" id="3.30.160.60">
    <property type="entry name" value="Classic Zinc Finger"/>
    <property type="match status" value="19"/>
</dbReference>
<dbReference type="InterPro" id="IPR001909">
    <property type="entry name" value="KRAB"/>
</dbReference>
<dbReference type="InterPro" id="IPR036051">
    <property type="entry name" value="KRAB_dom_sf"/>
</dbReference>
<dbReference type="InterPro" id="IPR036236">
    <property type="entry name" value="Znf_C2H2_sf"/>
</dbReference>
<dbReference type="InterPro" id="IPR013087">
    <property type="entry name" value="Znf_C2H2_type"/>
</dbReference>
<dbReference type="PANTHER" id="PTHR24381">
    <property type="entry name" value="ZINC FINGER PROTEIN"/>
    <property type="match status" value="1"/>
</dbReference>
<dbReference type="PANTHER" id="PTHR24381:SF427">
    <property type="entry name" value="ZINC FINGER PROTEIN 491"/>
    <property type="match status" value="1"/>
</dbReference>
<dbReference type="Pfam" id="PF01352">
    <property type="entry name" value="KRAB"/>
    <property type="match status" value="1"/>
</dbReference>
<dbReference type="Pfam" id="PF00096">
    <property type="entry name" value="zf-C2H2"/>
    <property type="match status" value="10"/>
</dbReference>
<dbReference type="Pfam" id="PF13912">
    <property type="entry name" value="zf-C2H2_6"/>
    <property type="match status" value="1"/>
</dbReference>
<dbReference type="SMART" id="SM00349">
    <property type="entry name" value="KRAB"/>
    <property type="match status" value="1"/>
</dbReference>
<dbReference type="SMART" id="SM00355">
    <property type="entry name" value="ZnF_C2H2"/>
    <property type="match status" value="18"/>
</dbReference>
<dbReference type="SUPFAM" id="SSF57667">
    <property type="entry name" value="beta-beta-alpha zinc fingers"/>
    <property type="match status" value="11"/>
</dbReference>
<dbReference type="SUPFAM" id="SSF109640">
    <property type="entry name" value="KRAB domain (Kruppel-associated box)"/>
    <property type="match status" value="1"/>
</dbReference>
<dbReference type="PROSITE" id="PS50805">
    <property type="entry name" value="KRAB"/>
    <property type="match status" value="1"/>
</dbReference>
<dbReference type="PROSITE" id="PS00028">
    <property type="entry name" value="ZINC_FINGER_C2H2_1"/>
    <property type="match status" value="14"/>
</dbReference>
<dbReference type="PROSITE" id="PS50157">
    <property type="entry name" value="ZINC_FINGER_C2H2_2"/>
    <property type="match status" value="19"/>
</dbReference>
<accession>Q8N8Z8</accession>
<comment type="function">
    <text>May be involved in transcriptional regulation.</text>
</comment>
<comment type="interaction">
    <interactant intactId="EBI-17216366">
        <id>Q8N8Z8</id>
    </interactant>
    <interactant intactId="EBI-3867333">
        <id>A8MQ03</id>
        <label>CYSRT1</label>
    </interactant>
    <organismsDiffer>false</organismsDiffer>
    <experiments>3</experiments>
</comment>
<comment type="interaction">
    <interactant intactId="EBI-17216366">
        <id>Q8N8Z8</id>
    </interactant>
    <interactant intactId="EBI-739789">
        <id>Q92997</id>
        <label>DVL3</label>
    </interactant>
    <organismsDiffer>false</organismsDiffer>
    <experiments>3</experiments>
</comment>
<comment type="interaction">
    <interactant intactId="EBI-17216366">
        <id>Q8N8Z8</id>
    </interactant>
    <interactant intactId="EBI-724076">
        <id>Q99750</id>
        <label>MDFI</label>
    </interactant>
    <organismsDiffer>false</organismsDiffer>
    <experiments>3</experiments>
</comment>
<comment type="interaction">
    <interactant intactId="EBI-17216366">
        <id>Q8N8Z8</id>
    </interactant>
    <interactant intactId="EBI-2683528">
        <id>P29122</id>
        <label>PCSK6</label>
    </interactant>
    <organismsDiffer>false</organismsDiffer>
    <experiments>3</experiments>
</comment>
<comment type="interaction">
    <interactant intactId="EBI-17216366">
        <id>Q8N8Z8</id>
    </interactant>
    <interactant intactId="EBI-3866665">
        <id>O43609</id>
        <label>SPRY1</label>
    </interactant>
    <organismsDiffer>false</organismsDiffer>
    <experiments>3</experiments>
</comment>
<comment type="interaction">
    <interactant intactId="EBI-17216366">
        <id>Q8N8Z8</id>
    </interactant>
    <interactant intactId="EBI-712466">
        <id>Q16623</id>
        <label>STX1A</label>
    </interactant>
    <organismsDiffer>false</organismsDiffer>
    <experiments>3</experiments>
</comment>
<comment type="interaction">
    <interactant intactId="EBI-17216366">
        <id>Q8N8Z8</id>
    </interactant>
    <interactant intactId="EBI-18583507">
        <id>A0A1B0GUV7</id>
        <label>TEX48</label>
    </interactant>
    <organismsDiffer>false</organismsDiffer>
    <experiments>3</experiments>
</comment>
<comment type="subcellular location">
    <subcellularLocation>
        <location evidence="4">Nucleus</location>
    </subcellularLocation>
</comment>
<comment type="alternative products">
    <event type="alternative splicing"/>
    <isoform>
        <id>Q8N8Z8-1</id>
        <name>1</name>
        <sequence type="displayed"/>
    </isoform>
    <isoform>
        <id>Q8N8Z8-2</id>
        <name>2</name>
        <sequence type="described" ref="VSP_039877"/>
    </isoform>
</comment>
<comment type="similarity">
    <text evidence="4">Belongs to the krueppel C2H2-type zinc-finger protein family.</text>
</comment>
<comment type="sequence caution" evidence="4">
    <conflict type="frameshift">
        <sequence resource="EMBL-CDS" id="BAC04661"/>
    </conflict>
</comment>